<sequence>MPPLRETVRVHGLSASKALGQNFLFDEQLLDRIAAIPGDLDGATVFEVGPGPGGLTRALLRTGARVIAVERDERCLPLLADLAEAFPGQLTVIADDAMAVDVDALTGGDPYHIVANLPYNVGTALFTRWLEPAAWPPRWLSLTLMFQLEVAERIVAPVGTSAYGRLAVLAQWRARARIAMKVHRSAFTPPPKVMSAIVQLTPADQPPGVDPRILSRLTEKGFGQRRKMLRQSLKGIDGAVAAAEALGIDPTRRAETVSVAEWVALARALGR</sequence>
<evidence type="ECO:0000255" key="1">
    <source>
        <dbReference type="HAMAP-Rule" id="MF_00607"/>
    </source>
</evidence>
<feature type="chain" id="PRO_0000257350" description="Ribosomal RNA small subunit methyltransferase A">
    <location>
        <begin position="1"/>
        <end position="271"/>
    </location>
</feature>
<feature type="binding site" evidence="1">
    <location>
        <position position="22"/>
    </location>
    <ligand>
        <name>S-adenosyl-L-methionine</name>
        <dbReference type="ChEBI" id="CHEBI:59789"/>
    </ligand>
</feature>
<feature type="binding site" evidence="1">
    <location>
        <position position="24"/>
    </location>
    <ligand>
        <name>S-adenosyl-L-methionine</name>
        <dbReference type="ChEBI" id="CHEBI:59789"/>
    </ligand>
</feature>
<feature type="binding site" evidence="1">
    <location>
        <position position="49"/>
    </location>
    <ligand>
        <name>S-adenosyl-L-methionine</name>
        <dbReference type="ChEBI" id="CHEBI:59789"/>
    </ligand>
</feature>
<feature type="binding site" evidence="1">
    <location>
        <position position="70"/>
    </location>
    <ligand>
        <name>S-adenosyl-L-methionine</name>
        <dbReference type="ChEBI" id="CHEBI:59789"/>
    </ligand>
</feature>
<feature type="binding site" evidence="1">
    <location>
        <position position="96"/>
    </location>
    <ligand>
        <name>S-adenosyl-L-methionine</name>
        <dbReference type="ChEBI" id="CHEBI:59789"/>
    </ligand>
</feature>
<feature type="binding site" evidence="1">
    <location>
        <position position="116"/>
    </location>
    <ligand>
        <name>S-adenosyl-L-methionine</name>
        <dbReference type="ChEBI" id="CHEBI:59789"/>
    </ligand>
</feature>
<dbReference type="EC" id="2.1.1.182" evidence="1"/>
<dbReference type="EMBL" id="CP000356">
    <property type="protein sequence ID" value="ABF53191.1"/>
    <property type="molecule type" value="Genomic_DNA"/>
</dbReference>
<dbReference type="SMR" id="Q1GT31"/>
<dbReference type="STRING" id="317655.Sala_1478"/>
<dbReference type="KEGG" id="sal:Sala_1478"/>
<dbReference type="eggNOG" id="COG0030">
    <property type="taxonomic scope" value="Bacteria"/>
</dbReference>
<dbReference type="HOGENOM" id="CLU_041220_0_1_5"/>
<dbReference type="OrthoDB" id="9814755at2"/>
<dbReference type="Proteomes" id="UP000006578">
    <property type="component" value="Chromosome"/>
</dbReference>
<dbReference type="GO" id="GO:0005829">
    <property type="term" value="C:cytosol"/>
    <property type="evidence" value="ECO:0007669"/>
    <property type="project" value="TreeGrafter"/>
</dbReference>
<dbReference type="GO" id="GO:0052908">
    <property type="term" value="F:16S rRNA (adenine(1518)-N(6)/adenine(1519)-N(6))-dimethyltransferase activity"/>
    <property type="evidence" value="ECO:0007669"/>
    <property type="project" value="UniProtKB-EC"/>
</dbReference>
<dbReference type="GO" id="GO:0003723">
    <property type="term" value="F:RNA binding"/>
    <property type="evidence" value="ECO:0007669"/>
    <property type="project" value="UniProtKB-KW"/>
</dbReference>
<dbReference type="CDD" id="cd02440">
    <property type="entry name" value="AdoMet_MTases"/>
    <property type="match status" value="1"/>
</dbReference>
<dbReference type="FunFam" id="1.10.8.100:FF:000001">
    <property type="entry name" value="Ribosomal RNA small subunit methyltransferase A"/>
    <property type="match status" value="1"/>
</dbReference>
<dbReference type="Gene3D" id="1.10.8.100">
    <property type="entry name" value="Ribosomal RNA adenine dimethylase-like, domain 2"/>
    <property type="match status" value="1"/>
</dbReference>
<dbReference type="Gene3D" id="3.40.50.150">
    <property type="entry name" value="Vaccinia Virus protein VP39"/>
    <property type="match status" value="1"/>
</dbReference>
<dbReference type="HAMAP" id="MF_00607">
    <property type="entry name" value="16SrRNA_methyltr_A"/>
    <property type="match status" value="1"/>
</dbReference>
<dbReference type="InterPro" id="IPR001737">
    <property type="entry name" value="KsgA/Erm"/>
</dbReference>
<dbReference type="InterPro" id="IPR023165">
    <property type="entry name" value="rRNA_Ade_diMease-like_C"/>
</dbReference>
<dbReference type="InterPro" id="IPR020596">
    <property type="entry name" value="rRNA_Ade_Mease_Trfase_CS"/>
</dbReference>
<dbReference type="InterPro" id="IPR020598">
    <property type="entry name" value="rRNA_Ade_methylase_Trfase_N"/>
</dbReference>
<dbReference type="InterPro" id="IPR011530">
    <property type="entry name" value="rRNA_adenine_dimethylase"/>
</dbReference>
<dbReference type="InterPro" id="IPR029063">
    <property type="entry name" value="SAM-dependent_MTases_sf"/>
</dbReference>
<dbReference type="NCBIfam" id="TIGR00755">
    <property type="entry name" value="ksgA"/>
    <property type="match status" value="1"/>
</dbReference>
<dbReference type="PANTHER" id="PTHR11727">
    <property type="entry name" value="DIMETHYLADENOSINE TRANSFERASE"/>
    <property type="match status" value="1"/>
</dbReference>
<dbReference type="PANTHER" id="PTHR11727:SF7">
    <property type="entry name" value="DIMETHYLADENOSINE TRANSFERASE-RELATED"/>
    <property type="match status" value="1"/>
</dbReference>
<dbReference type="Pfam" id="PF00398">
    <property type="entry name" value="RrnaAD"/>
    <property type="match status" value="1"/>
</dbReference>
<dbReference type="SMART" id="SM00650">
    <property type="entry name" value="rADc"/>
    <property type="match status" value="1"/>
</dbReference>
<dbReference type="SUPFAM" id="SSF53335">
    <property type="entry name" value="S-adenosyl-L-methionine-dependent methyltransferases"/>
    <property type="match status" value="1"/>
</dbReference>
<dbReference type="PROSITE" id="PS01131">
    <property type="entry name" value="RRNA_A_DIMETH"/>
    <property type="match status" value="1"/>
</dbReference>
<dbReference type="PROSITE" id="PS51689">
    <property type="entry name" value="SAM_RNA_A_N6_MT"/>
    <property type="match status" value="1"/>
</dbReference>
<organism>
    <name type="scientific">Sphingopyxis alaskensis (strain DSM 13593 / LMG 18877 / RB2256)</name>
    <name type="common">Sphingomonas alaskensis</name>
    <dbReference type="NCBI Taxonomy" id="317655"/>
    <lineage>
        <taxon>Bacteria</taxon>
        <taxon>Pseudomonadati</taxon>
        <taxon>Pseudomonadota</taxon>
        <taxon>Alphaproteobacteria</taxon>
        <taxon>Sphingomonadales</taxon>
        <taxon>Sphingomonadaceae</taxon>
        <taxon>Sphingopyxis</taxon>
    </lineage>
</organism>
<reference key="1">
    <citation type="journal article" date="2009" name="Proc. Natl. Acad. Sci. U.S.A.">
        <title>The genomic basis of trophic strategy in marine bacteria.</title>
        <authorList>
            <person name="Lauro F.M."/>
            <person name="McDougald D."/>
            <person name="Thomas T."/>
            <person name="Williams T.J."/>
            <person name="Egan S."/>
            <person name="Rice S."/>
            <person name="DeMaere M.Z."/>
            <person name="Ting L."/>
            <person name="Ertan H."/>
            <person name="Johnson J."/>
            <person name="Ferriera S."/>
            <person name="Lapidus A."/>
            <person name="Anderson I."/>
            <person name="Kyrpides N."/>
            <person name="Munk A.C."/>
            <person name="Detter C."/>
            <person name="Han C.S."/>
            <person name="Brown M.V."/>
            <person name="Robb F.T."/>
            <person name="Kjelleberg S."/>
            <person name="Cavicchioli R."/>
        </authorList>
    </citation>
    <scope>NUCLEOTIDE SEQUENCE [LARGE SCALE GENOMIC DNA]</scope>
    <source>
        <strain>DSM 13593 / LMG 18877 / RB2256</strain>
    </source>
</reference>
<comment type="function">
    <text evidence="1">Specifically dimethylates two adjacent adenosines (A1518 and A1519) in the loop of a conserved hairpin near the 3'-end of 16S rRNA in the 30S particle. May play a critical role in biogenesis of 30S subunits.</text>
</comment>
<comment type="catalytic activity">
    <reaction evidence="1">
        <text>adenosine(1518)/adenosine(1519) in 16S rRNA + 4 S-adenosyl-L-methionine = N(6)-dimethyladenosine(1518)/N(6)-dimethyladenosine(1519) in 16S rRNA + 4 S-adenosyl-L-homocysteine + 4 H(+)</text>
        <dbReference type="Rhea" id="RHEA:19609"/>
        <dbReference type="Rhea" id="RHEA-COMP:10232"/>
        <dbReference type="Rhea" id="RHEA-COMP:10233"/>
        <dbReference type="ChEBI" id="CHEBI:15378"/>
        <dbReference type="ChEBI" id="CHEBI:57856"/>
        <dbReference type="ChEBI" id="CHEBI:59789"/>
        <dbReference type="ChEBI" id="CHEBI:74411"/>
        <dbReference type="ChEBI" id="CHEBI:74493"/>
        <dbReference type="EC" id="2.1.1.182"/>
    </reaction>
</comment>
<comment type="subcellular location">
    <subcellularLocation>
        <location evidence="1">Cytoplasm</location>
    </subcellularLocation>
</comment>
<comment type="similarity">
    <text evidence="1">Belongs to the class I-like SAM-binding methyltransferase superfamily. rRNA adenine N(6)-methyltransferase family. RsmA subfamily.</text>
</comment>
<proteinExistence type="inferred from homology"/>
<name>RSMA_SPHAL</name>
<protein>
    <recommendedName>
        <fullName evidence="1">Ribosomal RNA small subunit methyltransferase A</fullName>
        <ecNumber evidence="1">2.1.1.182</ecNumber>
    </recommendedName>
    <alternativeName>
        <fullName evidence="1">16S rRNA (adenine(1518)-N(6)/adenine(1519)-N(6))-dimethyltransferase</fullName>
    </alternativeName>
    <alternativeName>
        <fullName evidence="1">16S rRNA dimethyladenosine transferase</fullName>
    </alternativeName>
    <alternativeName>
        <fullName evidence="1">16S rRNA dimethylase</fullName>
    </alternativeName>
    <alternativeName>
        <fullName evidence="1">S-adenosylmethionine-6-N', N'-adenosyl(rRNA) dimethyltransferase</fullName>
    </alternativeName>
</protein>
<keyword id="KW-0963">Cytoplasm</keyword>
<keyword id="KW-0489">Methyltransferase</keyword>
<keyword id="KW-1185">Reference proteome</keyword>
<keyword id="KW-0694">RNA-binding</keyword>
<keyword id="KW-0698">rRNA processing</keyword>
<keyword id="KW-0949">S-adenosyl-L-methionine</keyword>
<keyword id="KW-0808">Transferase</keyword>
<gene>
    <name evidence="1" type="primary">rsmA</name>
    <name evidence="1" type="synonym">ksgA</name>
    <name type="ordered locus">Sala_1478</name>
</gene>
<accession>Q1GT31</accession>